<sequence length="816" mass="91730">MSTVEPNAYDPQQVETSAQQFWDATRAFQVDENSDKPKFYCLSMLPYPSGALHMGHVRNYTISDVVSRYKRMTGHNVLQPMGWDAFGLPAENAAIKNKTAPAKWTYANIEHMRAQLKSLGYAIDWSREFATCTPDYYVHEQRMFTRLMRKGLAYRRNAVVNWDPIDQTVLANEQVIDGRGWRSGALVEKREIPQWFLRITDYAQELLDGLDQLDGWPDSVKTMQRNWIGRSEGLEIQFDVRDTTGAALDPLRVFTTRPDTLMGVTFVSIAAEHPLAQHAAKSNPELASMLETLKHGGVSEAELETQEKRGMATGLTAVHPISGEEVPVWVANFVLMGYGTGAVMAVPGHDQRDFEFANKYGLPIVQVVKLREPRNDDEQAWDATQWRDWYTDKSRELELINSAEFDGLDYHGAFEALAERFERKGQGQRRINYRLRDWGVSRQRYWGCPIPVIYCAKCGAVPVPEDQLPVVLPENVEFAGTGSPIKTDPTWRQTTCPECGGPAERETDTFDTFMESSWYVARYTSPNARDMVDRRANYWMPADLYVGGIEHAILHLMYFRFYHKLMRDARLVDSDEPVTNLLTQGMVIAETFYRDADNGGKDWINPADVEIQRDERGRVVGASLIADGQPVHIGGTEKMSKSKNNGVDPQAMVAKYGADTVRLFSMFAAPPEQSLEWNEAGVDGMARFMRRLWVQVHKHVGEGAAALDVASLSAEQKAIRRKTHETIGKVDDDYGRRHSFNTAIAAVMELSNALAKFDDASAQGRAVRQEALEAMVLLLNPITPHASHALWQVLGRGETLLENVPFPQVDAAGAGA</sequence>
<protein>
    <recommendedName>
        <fullName evidence="1">Leucine--tRNA ligase</fullName>
        <ecNumber evidence="1">6.1.1.4</ecNumber>
    </recommendedName>
    <alternativeName>
        <fullName evidence="1">Leucyl-tRNA synthetase</fullName>
        <shortName evidence="1">LeuRS</shortName>
    </alternativeName>
</protein>
<proteinExistence type="inferred from homology"/>
<accession>Q8P7J1</accession>
<feature type="chain" id="PRO_0000152121" description="Leucine--tRNA ligase">
    <location>
        <begin position="1"/>
        <end position="816"/>
    </location>
</feature>
<feature type="short sequence motif" description="'HIGH' region">
    <location>
        <begin position="46"/>
        <end position="56"/>
    </location>
</feature>
<feature type="short sequence motif" description="'KMSKS' region">
    <location>
        <begin position="638"/>
        <end position="642"/>
    </location>
</feature>
<feature type="binding site" evidence="1">
    <location>
        <position position="641"/>
    </location>
    <ligand>
        <name>ATP</name>
        <dbReference type="ChEBI" id="CHEBI:30616"/>
    </ligand>
</feature>
<evidence type="ECO:0000255" key="1">
    <source>
        <dbReference type="HAMAP-Rule" id="MF_00049"/>
    </source>
</evidence>
<evidence type="ECO:0000305" key="2"/>
<reference key="1">
    <citation type="journal article" date="2002" name="Nature">
        <title>Comparison of the genomes of two Xanthomonas pathogens with differing host specificities.</title>
        <authorList>
            <person name="da Silva A.C.R."/>
            <person name="Ferro J.A."/>
            <person name="Reinach F.C."/>
            <person name="Farah C.S."/>
            <person name="Furlan L.R."/>
            <person name="Quaggio R.B."/>
            <person name="Monteiro-Vitorello C.B."/>
            <person name="Van Sluys M.A."/>
            <person name="Almeida N.F. Jr."/>
            <person name="Alves L.M.C."/>
            <person name="do Amaral A.M."/>
            <person name="Bertolini M.C."/>
            <person name="Camargo L.E.A."/>
            <person name="Camarotte G."/>
            <person name="Cannavan F."/>
            <person name="Cardozo J."/>
            <person name="Chambergo F."/>
            <person name="Ciapina L.P."/>
            <person name="Cicarelli R.M.B."/>
            <person name="Coutinho L.L."/>
            <person name="Cursino-Santos J.R."/>
            <person name="El-Dorry H."/>
            <person name="Faria J.B."/>
            <person name="Ferreira A.J.S."/>
            <person name="Ferreira R.C.C."/>
            <person name="Ferro M.I.T."/>
            <person name="Formighieri E.F."/>
            <person name="Franco M.C."/>
            <person name="Greggio C.C."/>
            <person name="Gruber A."/>
            <person name="Katsuyama A.M."/>
            <person name="Kishi L.T."/>
            <person name="Leite R.P."/>
            <person name="Lemos E.G.M."/>
            <person name="Lemos M.V.F."/>
            <person name="Locali E.C."/>
            <person name="Machado M.A."/>
            <person name="Madeira A.M.B.N."/>
            <person name="Martinez-Rossi N.M."/>
            <person name="Martins E.C."/>
            <person name="Meidanis J."/>
            <person name="Menck C.F.M."/>
            <person name="Miyaki C.Y."/>
            <person name="Moon D.H."/>
            <person name="Moreira L.M."/>
            <person name="Novo M.T.M."/>
            <person name="Okura V.K."/>
            <person name="Oliveira M.C."/>
            <person name="Oliveira V.R."/>
            <person name="Pereira H.A."/>
            <person name="Rossi A."/>
            <person name="Sena J.A.D."/>
            <person name="Silva C."/>
            <person name="de Souza R.F."/>
            <person name="Spinola L.A.F."/>
            <person name="Takita M.A."/>
            <person name="Tamura R.E."/>
            <person name="Teixeira E.C."/>
            <person name="Tezza R.I.D."/>
            <person name="Trindade dos Santos M."/>
            <person name="Truffi D."/>
            <person name="Tsai S.M."/>
            <person name="White F.F."/>
            <person name="Setubal J.C."/>
            <person name="Kitajima J.P."/>
        </authorList>
    </citation>
    <scope>NUCLEOTIDE SEQUENCE [LARGE SCALE GENOMIC DNA]</scope>
    <source>
        <strain>ATCC 33913 / DSM 3586 / NCPPB 528 / LMG 568 / P 25</strain>
    </source>
</reference>
<comment type="catalytic activity">
    <reaction evidence="1">
        <text>tRNA(Leu) + L-leucine + ATP = L-leucyl-tRNA(Leu) + AMP + diphosphate</text>
        <dbReference type="Rhea" id="RHEA:11688"/>
        <dbReference type="Rhea" id="RHEA-COMP:9613"/>
        <dbReference type="Rhea" id="RHEA-COMP:9622"/>
        <dbReference type="ChEBI" id="CHEBI:30616"/>
        <dbReference type="ChEBI" id="CHEBI:33019"/>
        <dbReference type="ChEBI" id="CHEBI:57427"/>
        <dbReference type="ChEBI" id="CHEBI:78442"/>
        <dbReference type="ChEBI" id="CHEBI:78494"/>
        <dbReference type="ChEBI" id="CHEBI:456215"/>
        <dbReference type="EC" id="6.1.1.4"/>
    </reaction>
</comment>
<comment type="subcellular location">
    <subcellularLocation>
        <location evidence="1">Cytoplasm</location>
    </subcellularLocation>
</comment>
<comment type="similarity">
    <text evidence="1">Belongs to the class-I aminoacyl-tRNA synthetase family.</text>
</comment>
<comment type="sequence caution" evidence="2">
    <conflict type="erroneous initiation">
        <sequence resource="EMBL-CDS" id="AAM41892"/>
    </conflict>
</comment>
<dbReference type="EC" id="6.1.1.4" evidence="1"/>
<dbReference type="EMBL" id="AE008922">
    <property type="protein sequence ID" value="AAM41892.1"/>
    <property type="status" value="ALT_INIT"/>
    <property type="molecule type" value="Genomic_DNA"/>
</dbReference>
<dbReference type="RefSeq" id="NP_637968.2">
    <property type="nucleotide sequence ID" value="NC_003902.1"/>
</dbReference>
<dbReference type="SMR" id="Q8P7J1"/>
<dbReference type="STRING" id="190485.XCC2620"/>
<dbReference type="EnsemblBacteria" id="AAM41892">
    <property type="protein sequence ID" value="AAM41892"/>
    <property type="gene ID" value="XCC2620"/>
</dbReference>
<dbReference type="KEGG" id="xcc:XCC2620"/>
<dbReference type="PATRIC" id="fig|190485.4.peg.2789"/>
<dbReference type="eggNOG" id="COG0495">
    <property type="taxonomic scope" value="Bacteria"/>
</dbReference>
<dbReference type="HOGENOM" id="CLU_004427_0_0_6"/>
<dbReference type="OrthoDB" id="9810365at2"/>
<dbReference type="Proteomes" id="UP000001010">
    <property type="component" value="Chromosome"/>
</dbReference>
<dbReference type="GO" id="GO:0005829">
    <property type="term" value="C:cytosol"/>
    <property type="evidence" value="ECO:0000318"/>
    <property type="project" value="GO_Central"/>
</dbReference>
<dbReference type="GO" id="GO:0002161">
    <property type="term" value="F:aminoacyl-tRNA deacylase activity"/>
    <property type="evidence" value="ECO:0007669"/>
    <property type="project" value="InterPro"/>
</dbReference>
<dbReference type="GO" id="GO:0005524">
    <property type="term" value="F:ATP binding"/>
    <property type="evidence" value="ECO:0007669"/>
    <property type="project" value="UniProtKB-UniRule"/>
</dbReference>
<dbReference type="GO" id="GO:0004823">
    <property type="term" value="F:leucine-tRNA ligase activity"/>
    <property type="evidence" value="ECO:0000318"/>
    <property type="project" value="GO_Central"/>
</dbReference>
<dbReference type="GO" id="GO:0006429">
    <property type="term" value="P:leucyl-tRNA aminoacylation"/>
    <property type="evidence" value="ECO:0000318"/>
    <property type="project" value="GO_Central"/>
</dbReference>
<dbReference type="CDD" id="cd07958">
    <property type="entry name" value="Anticodon_Ia_Leu_BEm"/>
    <property type="match status" value="1"/>
</dbReference>
<dbReference type="CDD" id="cd00812">
    <property type="entry name" value="LeuRS_core"/>
    <property type="match status" value="1"/>
</dbReference>
<dbReference type="FunFam" id="1.10.730.10:FF:000003">
    <property type="entry name" value="Leucine--tRNA ligase"/>
    <property type="match status" value="1"/>
</dbReference>
<dbReference type="FunFam" id="2.20.28.290:FF:000001">
    <property type="entry name" value="Leucine--tRNA ligase"/>
    <property type="match status" value="1"/>
</dbReference>
<dbReference type="FunFam" id="3.40.50.620:FF:000003">
    <property type="entry name" value="Leucine--tRNA ligase"/>
    <property type="match status" value="1"/>
</dbReference>
<dbReference type="FunFam" id="3.40.50.620:FF:000124">
    <property type="entry name" value="Leucine--tRNA ligase"/>
    <property type="match status" value="1"/>
</dbReference>
<dbReference type="FunFam" id="3.90.740.10:FF:000012">
    <property type="entry name" value="Leucine--tRNA ligase"/>
    <property type="match status" value="1"/>
</dbReference>
<dbReference type="Gene3D" id="2.20.28.290">
    <property type="match status" value="1"/>
</dbReference>
<dbReference type="Gene3D" id="3.40.50.620">
    <property type="entry name" value="HUPs"/>
    <property type="match status" value="2"/>
</dbReference>
<dbReference type="Gene3D" id="1.10.730.10">
    <property type="entry name" value="Isoleucyl-tRNA Synthetase, Domain 1"/>
    <property type="match status" value="1"/>
</dbReference>
<dbReference type="Gene3D" id="3.90.740.10">
    <property type="entry name" value="Valyl/Leucyl/Isoleucyl-tRNA synthetase, editing domain"/>
    <property type="match status" value="1"/>
</dbReference>
<dbReference type="HAMAP" id="MF_00049_B">
    <property type="entry name" value="Leu_tRNA_synth_B"/>
    <property type="match status" value="1"/>
</dbReference>
<dbReference type="InterPro" id="IPR001412">
    <property type="entry name" value="aa-tRNA-synth_I_CS"/>
</dbReference>
<dbReference type="InterPro" id="IPR002300">
    <property type="entry name" value="aa-tRNA-synth_Ia"/>
</dbReference>
<dbReference type="InterPro" id="IPR002302">
    <property type="entry name" value="Leu-tRNA-ligase"/>
</dbReference>
<dbReference type="InterPro" id="IPR025709">
    <property type="entry name" value="Leu_tRNA-synth_edit"/>
</dbReference>
<dbReference type="InterPro" id="IPR013155">
    <property type="entry name" value="M/V/L/I-tRNA-synth_anticd-bd"/>
</dbReference>
<dbReference type="InterPro" id="IPR015413">
    <property type="entry name" value="Methionyl/Leucyl_tRNA_Synth"/>
</dbReference>
<dbReference type="InterPro" id="IPR014729">
    <property type="entry name" value="Rossmann-like_a/b/a_fold"/>
</dbReference>
<dbReference type="InterPro" id="IPR009080">
    <property type="entry name" value="tRNAsynth_Ia_anticodon-bd"/>
</dbReference>
<dbReference type="InterPro" id="IPR009008">
    <property type="entry name" value="Val/Leu/Ile-tRNA-synth_edit"/>
</dbReference>
<dbReference type="NCBIfam" id="TIGR00396">
    <property type="entry name" value="leuS_bact"/>
    <property type="match status" value="1"/>
</dbReference>
<dbReference type="PANTHER" id="PTHR43740:SF2">
    <property type="entry name" value="LEUCINE--TRNA LIGASE, MITOCHONDRIAL"/>
    <property type="match status" value="1"/>
</dbReference>
<dbReference type="PANTHER" id="PTHR43740">
    <property type="entry name" value="LEUCYL-TRNA SYNTHETASE"/>
    <property type="match status" value="1"/>
</dbReference>
<dbReference type="Pfam" id="PF08264">
    <property type="entry name" value="Anticodon_1"/>
    <property type="match status" value="1"/>
</dbReference>
<dbReference type="Pfam" id="PF00133">
    <property type="entry name" value="tRNA-synt_1"/>
    <property type="match status" value="2"/>
</dbReference>
<dbReference type="Pfam" id="PF13603">
    <property type="entry name" value="tRNA-synt_1_2"/>
    <property type="match status" value="1"/>
</dbReference>
<dbReference type="Pfam" id="PF09334">
    <property type="entry name" value="tRNA-synt_1g"/>
    <property type="match status" value="1"/>
</dbReference>
<dbReference type="PRINTS" id="PR00985">
    <property type="entry name" value="TRNASYNTHLEU"/>
</dbReference>
<dbReference type="SUPFAM" id="SSF47323">
    <property type="entry name" value="Anticodon-binding domain of a subclass of class I aminoacyl-tRNA synthetases"/>
    <property type="match status" value="1"/>
</dbReference>
<dbReference type="SUPFAM" id="SSF52374">
    <property type="entry name" value="Nucleotidylyl transferase"/>
    <property type="match status" value="1"/>
</dbReference>
<dbReference type="SUPFAM" id="SSF50677">
    <property type="entry name" value="ValRS/IleRS/LeuRS editing domain"/>
    <property type="match status" value="1"/>
</dbReference>
<dbReference type="PROSITE" id="PS00178">
    <property type="entry name" value="AA_TRNA_LIGASE_I"/>
    <property type="match status" value="1"/>
</dbReference>
<gene>
    <name evidence="1" type="primary">leuS</name>
    <name type="ordered locus">XCC2620</name>
</gene>
<name>SYL_XANCP</name>
<organism>
    <name type="scientific">Xanthomonas campestris pv. campestris (strain ATCC 33913 / DSM 3586 / NCPPB 528 / LMG 568 / P 25)</name>
    <dbReference type="NCBI Taxonomy" id="190485"/>
    <lineage>
        <taxon>Bacteria</taxon>
        <taxon>Pseudomonadati</taxon>
        <taxon>Pseudomonadota</taxon>
        <taxon>Gammaproteobacteria</taxon>
        <taxon>Lysobacterales</taxon>
        <taxon>Lysobacteraceae</taxon>
        <taxon>Xanthomonas</taxon>
    </lineage>
</organism>
<keyword id="KW-0030">Aminoacyl-tRNA synthetase</keyword>
<keyword id="KW-0067">ATP-binding</keyword>
<keyword id="KW-0963">Cytoplasm</keyword>
<keyword id="KW-0436">Ligase</keyword>
<keyword id="KW-0547">Nucleotide-binding</keyword>
<keyword id="KW-0648">Protein biosynthesis</keyword>
<keyword id="KW-1185">Reference proteome</keyword>